<comment type="function">
    <text evidence="1">Transfers a succinyl group from succinyl-CoA to L-homoserine, forming succinyl-L-homoserine.</text>
</comment>
<comment type="catalytic activity">
    <reaction evidence="1">
        <text>L-homoserine + succinyl-CoA = O-succinyl-L-homoserine + CoA</text>
        <dbReference type="Rhea" id="RHEA:22008"/>
        <dbReference type="ChEBI" id="CHEBI:57287"/>
        <dbReference type="ChEBI" id="CHEBI:57292"/>
        <dbReference type="ChEBI" id="CHEBI:57476"/>
        <dbReference type="ChEBI" id="CHEBI:57661"/>
        <dbReference type="EC" id="2.3.1.46"/>
    </reaction>
</comment>
<comment type="pathway">
    <text evidence="1">Amino-acid biosynthesis; L-methionine biosynthesis via de novo pathway; O-succinyl-L-homoserine from L-homoserine: step 1/1.</text>
</comment>
<comment type="subunit">
    <text evidence="1">Homodimer.</text>
</comment>
<comment type="subcellular location">
    <subcellularLocation>
        <location evidence="1">Cytoplasm</location>
    </subcellularLocation>
</comment>
<comment type="similarity">
    <text evidence="1">Belongs to the MetA family.</text>
</comment>
<keyword id="KW-0012">Acyltransferase</keyword>
<keyword id="KW-0028">Amino-acid biosynthesis</keyword>
<keyword id="KW-0963">Cytoplasm</keyword>
<keyword id="KW-0486">Methionine biosynthesis</keyword>
<keyword id="KW-0808">Transferase</keyword>
<feature type="chain" id="PRO_1000115180" description="Homoserine O-succinyltransferase">
    <location>
        <begin position="1"/>
        <end position="309"/>
    </location>
</feature>
<feature type="active site" description="Acyl-thioester intermediate" evidence="1">
    <location>
        <position position="142"/>
    </location>
</feature>
<feature type="active site" description="Proton acceptor" evidence="1">
    <location>
        <position position="235"/>
    </location>
</feature>
<feature type="active site" evidence="1">
    <location>
        <position position="237"/>
    </location>
</feature>
<feature type="binding site" evidence="1">
    <location>
        <position position="163"/>
    </location>
    <ligand>
        <name>substrate</name>
    </ligand>
</feature>
<feature type="binding site" evidence="1">
    <location>
        <position position="192"/>
    </location>
    <ligand>
        <name>substrate</name>
    </ligand>
</feature>
<feature type="binding site" evidence="1">
    <location>
        <position position="249"/>
    </location>
    <ligand>
        <name>substrate</name>
    </ligand>
</feature>
<feature type="site" description="Important for acyl-CoA specificity" evidence="1">
    <location>
        <position position="111"/>
    </location>
</feature>
<feature type="site" description="Important for substrate specificity" evidence="1">
    <location>
        <position position="192"/>
    </location>
</feature>
<evidence type="ECO:0000255" key="1">
    <source>
        <dbReference type="HAMAP-Rule" id="MF_00295"/>
    </source>
</evidence>
<reference key="1">
    <citation type="journal article" date="2008" name="DNA Res.">
        <title>Complete genome sequence and comparative analysis of the wild-type commensal Escherichia coli strain SE11 isolated from a healthy adult.</title>
        <authorList>
            <person name="Oshima K."/>
            <person name="Toh H."/>
            <person name="Ogura Y."/>
            <person name="Sasamoto H."/>
            <person name="Morita H."/>
            <person name="Park S.-H."/>
            <person name="Ooka T."/>
            <person name="Iyoda S."/>
            <person name="Taylor T.D."/>
            <person name="Hayashi T."/>
            <person name="Itoh K."/>
            <person name="Hattori M."/>
        </authorList>
    </citation>
    <scope>NUCLEOTIDE SEQUENCE [LARGE SCALE GENOMIC DNA]</scope>
    <source>
        <strain>SE11</strain>
    </source>
</reference>
<sequence>MPIRVPDELPAVNFLREENVFVMTTSRASGQEIRPLKVLILNLMPKKIETENQFLRLLSNSPLQVDIQLLRIDSRESRNTPAEHLNNFYCNFEDIQEQNFDGLIVTGAPLGLVEFNDVAYWPQIKQVLEWSKDHVTSTLFVCWAVQAALNILYGIPKQTRTDKLSGVYEHHILHPHALLTRGFDDSFLAPHSRYADFPAALIRDYTDLEILAETEEGDAYLFASKDKRIAFVTGHPEYDAQTLAQEFFRDVEAGLDPDVPYNYFPHNDPQNTPRASWRSHGNLLFTNWLNYYVYQITPYDLRHMNPTLD</sequence>
<proteinExistence type="inferred from homology"/>
<protein>
    <recommendedName>
        <fullName evidence="1">Homoserine O-succinyltransferase</fullName>
        <shortName evidence="1">HST</shortName>
        <ecNumber evidence="1">2.3.1.46</ecNumber>
    </recommendedName>
    <alternativeName>
        <fullName evidence="1">Homoserine transsuccinylase</fullName>
        <shortName evidence="1">HTS</shortName>
    </alternativeName>
</protein>
<organism>
    <name type="scientific">Escherichia coli (strain SE11)</name>
    <dbReference type="NCBI Taxonomy" id="409438"/>
    <lineage>
        <taxon>Bacteria</taxon>
        <taxon>Pseudomonadati</taxon>
        <taxon>Pseudomonadota</taxon>
        <taxon>Gammaproteobacteria</taxon>
        <taxon>Enterobacterales</taxon>
        <taxon>Enterobacteriaceae</taxon>
        <taxon>Escherichia</taxon>
    </lineage>
</organism>
<dbReference type="EC" id="2.3.1.46" evidence="1"/>
<dbReference type="EMBL" id="AP009240">
    <property type="protein sequence ID" value="BAG79822.1"/>
    <property type="molecule type" value="Genomic_DNA"/>
</dbReference>
<dbReference type="SMR" id="B6I5M1"/>
<dbReference type="KEGG" id="ecy:ECSE_4298"/>
<dbReference type="HOGENOM" id="CLU_057851_0_1_6"/>
<dbReference type="UniPathway" id="UPA00051">
    <property type="reaction ID" value="UER00075"/>
</dbReference>
<dbReference type="Proteomes" id="UP000008199">
    <property type="component" value="Chromosome"/>
</dbReference>
<dbReference type="GO" id="GO:0005737">
    <property type="term" value="C:cytoplasm"/>
    <property type="evidence" value="ECO:0007669"/>
    <property type="project" value="UniProtKB-SubCell"/>
</dbReference>
<dbReference type="GO" id="GO:0004414">
    <property type="term" value="F:homoserine O-acetyltransferase activity"/>
    <property type="evidence" value="ECO:0007669"/>
    <property type="project" value="UniProtKB-UniRule"/>
</dbReference>
<dbReference type="GO" id="GO:0008899">
    <property type="term" value="F:homoserine O-succinyltransferase activity"/>
    <property type="evidence" value="ECO:0007669"/>
    <property type="project" value="UniProtKB-EC"/>
</dbReference>
<dbReference type="GO" id="GO:0019281">
    <property type="term" value="P:L-methionine biosynthetic process from homoserine via O-succinyl-L-homoserine and cystathionine"/>
    <property type="evidence" value="ECO:0007669"/>
    <property type="project" value="InterPro"/>
</dbReference>
<dbReference type="CDD" id="cd03131">
    <property type="entry name" value="GATase1_HTS"/>
    <property type="match status" value="1"/>
</dbReference>
<dbReference type="FunFam" id="3.40.50.880:FF:000004">
    <property type="entry name" value="Homoserine O-succinyltransferase"/>
    <property type="match status" value="1"/>
</dbReference>
<dbReference type="Gene3D" id="3.40.50.880">
    <property type="match status" value="1"/>
</dbReference>
<dbReference type="HAMAP" id="MF_00295">
    <property type="entry name" value="MetA_acyltransf"/>
    <property type="match status" value="1"/>
</dbReference>
<dbReference type="InterPro" id="IPR029062">
    <property type="entry name" value="Class_I_gatase-like"/>
</dbReference>
<dbReference type="InterPro" id="IPR005697">
    <property type="entry name" value="HST_MetA"/>
</dbReference>
<dbReference type="InterPro" id="IPR033752">
    <property type="entry name" value="MetA_family"/>
</dbReference>
<dbReference type="NCBIfam" id="TIGR01001">
    <property type="entry name" value="metA"/>
    <property type="match status" value="1"/>
</dbReference>
<dbReference type="PANTHER" id="PTHR20919">
    <property type="entry name" value="HOMOSERINE O-SUCCINYLTRANSFERASE"/>
    <property type="match status" value="1"/>
</dbReference>
<dbReference type="PANTHER" id="PTHR20919:SF0">
    <property type="entry name" value="HOMOSERINE O-SUCCINYLTRANSFERASE"/>
    <property type="match status" value="1"/>
</dbReference>
<dbReference type="Pfam" id="PF04204">
    <property type="entry name" value="HTS"/>
    <property type="match status" value="1"/>
</dbReference>
<dbReference type="PIRSF" id="PIRSF000450">
    <property type="entry name" value="H_ser_succinyltr"/>
    <property type="match status" value="1"/>
</dbReference>
<dbReference type="SUPFAM" id="SSF52317">
    <property type="entry name" value="Class I glutamine amidotransferase-like"/>
    <property type="match status" value="1"/>
</dbReference>
<name>METAS_ECOSE</name>
<accession>B6I5M1</accession>
<gene>
    <name evidence="1" type="primary">metAS</name>
    <name type="ordered locus">ECSE_4298</name>
</gene>